<proteinExistence type="inferred from homology"/>
<organism>
    <name type="scientific">Picosynechococcus sp. (strain ATCC 27264 / PCC 7002 / PR-6)</name>
    <name type="common">Agmenellum quadruplicatum</name>
    <dbReference type="NCBI Taxonomy" id="32049"/>
    <lineage>
        <taxon>Bacteria</taxon>
        <taxon>Bacillati</taxon>
        <taxon>Cyanobacteriota</taxon>
        <taxon>Cyanophyceae</taxon>
        <taxon>Oscillatoriophycideae</taxon>
        <taxon>Chroococcales</taxon>
        <taxon>Geminocystaceae</taxon>
        <taxon>Picosynechococcus</taxon>
    </lineage>
</organism>
<comment type="function">
    <text evidence="1">Associates with the EF-Tu.GDP complex and induces the exchange of GDP to GTP. It remains bound to the aminoacyl-tRNA.EF-Tu.GTP complex up to the GTP hydrolysis stage on the ribosome.</text>
</comment>
<comment type="subcellular location">
    <subcellularLocation>
        <location evidence="1">Cytoplasm</location>
    </subcellularLocation>
</comment>
<comment type="similarity">
    <text evidence="1">Belongs to the EF-Ts family.</text>
</comment>
<accession>B1XQQ0</accession>
<dbReference type="EMBL" id="CP000951">
    <property type="protein sequence ID" value="ACA99945.1"/>
    <property type="molecule type" value="Genomic_DNA"/>
</dbReference>
<dbReference type="RefSeq" id="WP_012307568.1">
    <property type="nucleotide sequence ID" value="NZ_JAHHPU010000002.1"/>
</dbReference>
<dbReference type="SMR" id="B1XQQ0"/>
<dbReference type="STRING" id="32049.SYNPCC7002_A1958"/>
<dbReference type="KEGG" id="syp:SYNPCC7002_A1958"/>
<dbReference type="eggNOG" id="COG0264">
    <property type="taxonomic scope" value="Bacteria"/>
</dbReference>
<dbReference type="HOGENOM" id="CLU_047155_1_1_3"/>
<dbReference type="Proteomes" id="UP000001688">
    <property type="component" value="Chromosome"/>
</dbReference>
<dbReference type="GO" id="GO:0005737">
    <property type="term" value="C:cytoplasm"/>
    <property type="evidence" value="ECO:0007669"/>
    <property type="project" value="UniProtKB-SubCell"/>
</dbReference>
<dbReference type="GO" id="GO:0003746">
    <property type="term" value="F:translation elongation factor activity"/>
    <property type="evidence" value="ECO:0007669"/>
    <property type="project" value="UniProtKB-UniRule"/>
</dbReference>
<dbReference type="CDD" id="cd14275">
    <property type="entry name" value="UBA_EF-Ts"/>
    <property type="match status" value="1"/>
</dbReference>
<dbReference type="FunFam" id="1.10.286.20:FF:000001">
    <property type="entry name" value="Elongation factor Ts"/>
    <property type="match status" value="1"/>
</dbReference>
<dbReference type="FunFam" id="1.10.8.10:FF:000001">
    <property type="entry name" value="Elongation factor Ts"/>
    <property type="match status" value="1"/>
</dbReference>
<dbReference type="Gene3D" id="1.10.286.20">
    <property type="match status" value="1"/>
</dbReference>
<dbReference type="Gene3D" id="1.10.8.10">
    <property type="entry name" value="DNA helicase RuvA subunit, C-terminal domain"/>
    <property type="match status" value="1"/>
</dbReference>
<dbReference type="Gene3D" id="3.30.479.20">
    <property type="entry name" value="Elongation factor Ts, dimerisation domain"/>
    <property type="match status" value="1"/>
</dbReference>
<dbReference type="HAMAP" id="MF_00050">
    <property type="entry name" value="EF_Ts"/>
    <property type="match status" value="1"/>
</dbReference>
<dbReference type="InterPro" id="IPR036402">
    <property type="entry name" value="EF-Ts_dimer_sf"/>
</dbReference>
<dbReference type="InterPro" id="IPR001816">
    <property type="entry name" value="Transl_elong_EFTs/EF1B"/>
</dbReference>
<dbReference type="InterPro" id="IPR014039">
    <property type="entry name" value="Transl_elong_EFTs/EF1B_dimer"/>
</dbReference>
<dbReference type="InterPro" id="IPR018101">
    <property type="entry name" value="Transl_elong_Ts_CS"/>
</dbReference>
<dbReference type="InterPro" id="IPR009060">
    <property type="entry name" value="UBA-like_sf"/>
</dbReference>
<dbReference type="NCBIfam" id="TIGR00116">
    <property type="entry name" value="tsf"/>
    <property type="match status" value="2"/>
</dbReference>
<dbReference type="PANTHER" id="PTHR11741">
    <property type="entry name" value="ELONGATION FACTOR TS"/>
    <property type="match status" value="1"/>
</dbReference>
<dbReference type="PANTHER" id="PTHR11741:SF0">
    <property type="entry name" value="ELONGATION FACTOR TS, MITOCHONDRIAL"/>
    <property type="match status" value="1"/>
</dbReference>
<dbReference type="Pfam" id="PF00889">
    <property type="entry name" value="EF_TS"/>
    <property type="match status" value="1"/>
</dbReference>
<dbReference type="SUPFAM" id="SSF54713">
    <property type="entry name" value="Elongation factor Ts (EF-Ts), dimerisation domain"/>
    <property type="match status" value="1"/>
</dbReference>
<dbReference type="SUPFAM" id="SSF46934">
    <property type="entry name" value="UBA-like"/>
    <property type="match status" value="1"/>
</dbReference>
<dbReference type="PROSITE" id="PS01126">
    <property type="entry name" value="EF_TS_1"/>
    <property type="match status" value="1"/>
</dbReference>
<dbReference type="PROSITE" id="PS01127">
    <property type="entry name" value="EF_TS_2"/>
    <property type="match status" value="1"/>
</dbReference>
<feature type="chain" id="PRO_1000189890" description="Elongation factor Ts">
    <location>
        <begin position="1"/>
        <end position="218"/>
    </location>
</feature>
<feature type="region of interest" description="Involved in Mg(2+) ion dislocation from EF-Tu" evidence="1">
    <location>
        <begin position="82"/>
        <end position="85"/>
    </location>
</feature>
<reference key="1">
    <citation type="submission" date="2008-02" db="EMBL/GenBank/DDBJ databases">
        <title>Complete sequence of Synechococcus sp. PCC 7002.</title>
        <authorList>
            <person name="Li T."/>
            <person name="Zhao J."/>
            <person name="Zhao C."/>
            <person name="Liu Z."/>
            <person name="Zhao F."/>
            <person name="Marquardt J."/>
            <person name="Nomura C.T."/>
            <person name="Persson S."/>
            <person name="Detter J.C."/>
            <person name="Richardson P.M."/>
            <person name="Lanz C."/>
            <person name="Schuster S.C."/>
            <person name="Wang J."/>
            <person name="Li S."/>
            <person name="Huang X."/>
            <person name="Cai T."/>
            <person name="Yu Z."/>
            <person name="Luo J."/>
            <person name="Zhao J."/>
            <person name="Bryant D.A."/>
        </authorList>
    </citation>
    <scope>NUCLEOTIDE SEQUENCE [LARGE SCALE GENOMIC DNA]</scope>
    <source>
        <strain>ATCC 27264 / PCC 7002 / PR-6</strain>
    </source>
</reference>
<gene>
    <name evidence="1" type="primary">tsf</name>
    <name type="ordered locus">SYNPCC7002_A1958</name>
</gene>
<sequence length="218" mass="24069">MAQISAKLVKELRDKTGAGMMDCKKALGETNGDITKAIEWLRQKGITSAEKKAGRVAAEGLIESYIHTGGGIGVLVEVNCETDFVARGDIFKDLAKGIAMQIAACPNVQYVKVDDIPTEIADKEREIEMGRDDLAGKPDNIKEKIVEGRIAKRLKELSLMDQPYIRDQNMTVEELVKQSIATIGENIQIRRFQRFVLGEGIEKKEEDFAAEVAAQMGQ</sequence>
<evidence type="ECO:0000255" key="1">
    <source>
        <dbReference type="HAMAP-Rule" id="MF_00050"/>
    </source>
</evidence>
<name>EFTS_PICP2</name>
<keyword id="KW-0963">Cytoplasm</keyword>
<keyword id="KW-0251">Elongation factor</keyword>
<keyword id="KW-0648">Protein biosynthesis</keyword>
<keyword id="KW-1185">Reference proteome</keyword>
<protein>
    <recommendedName>
        <fullName evidence="1">Elongation factor Ts</fullName>
        <shortName evidence="1">EF-Ts</shortName>
    </recommendedName>
</protein>